<feature type="chain" id="PRO_0000426767" description="Uncharacterized ABC transporter ATP-binding protein MT1311">
    <location>
        <begin position="1"/>
        <end position="582"/>
    </location>
</feature>
<feature type="transmembrane region" description="Helical" evidence="2">
    <location>
        <begin position="17"/>
        <end position="37"/>
    </location>
</feature>
<feature type="transmembrane region" description="Helical" evidence="2">
    <location>
        <begin position="57"/>
        <end position="77"/>
    </location>
</feature>
<feature type="transmembrane region" description="Helical" evidence="2">
    <location>
        <begin position="131"/>
        <end position="151"/>
    </location>
</feature>
<feature type="transmembrane region" description="Helical" evidence="2">
    <location>
        <begin position="156"/>
        <end position="176"/>
    </location>
</feature>
<feature type="transmembrane region" description="Helical" evidence="2">
    <location>
        <begin position="239"/>
        <end position="259"/>
    </location>
</feature>
<feature type="transmembrane region" description="Helical" evidence="2">
    <location>
        <begin position="271"/>
        <end position="291"/>
    </location>
</feature>
<feature type="domain" description="ABC transmembrane type-1" evidence="2">
    <location>
        <begin position="17"/>
        <end position="300"/>
    </location>
</feature>
<feature type="domain" description="ABC transporter" evidence="1">
    <location>
        <begin position="335"/>
        <end position="571"/>
    </location>
</feature>
<feature type="binding site" evidence="1">
    <location>
        <begin position="369"/>
        <end position="376"/>
    </location>
    <ligand>
        <name>ATP</name>
        <dbReference type="ChEBI" id="CHEBI:30616"/>
    </ligand>
</feature>
<reference key="1">
    <citation type="journal article" date="2002" name="J. Bacteriol.">
        <title>Whole-genome comparison of Mycobacterium tuberculosis clinical and laboratory strains.</title>
        <authorList>
            <person name="Fleischmann R.D."/>
            <person name="Alland D."/>
            <person name="Eisen J.A."/>
            <person name="Carpenter L."/>
            <person name="White O."/>
            <person name="Peterson J.D."/>
            <person name="DeBoy R.T."/>
            <person name="Dodson R.J."/>
            <person name="Gwinn M.L."/>
            <person name="Haft D.H."/>
            <person name="Hickey E.K."/>
            <person name="Kolonay J.F."/>
            <person name="Nelson W.C."/>
            <person name="Umayam L.A."/>
            <person name="Ermolaeva M.D."/>
            <person name="Salzberg S.L."/>
            <person name="Delcher A."/>
            <person name="Utterback T.R."/>
            <person name="Weidman J.F."/>
            <person name="Khouri H.M."/>
            <person name="Gill J."/>
            <person name="Mikula A."/>
            <person name="Bishai W."/>
            <person name="Jacobs W.R. Jr."/>
            <person name="Venter J.C."/>
            <person name="Fraser C.M."/>
        </authorList>
    </citation>
    <scope>NUCLEOTIDE SEQUENCE [LARGE SCALE GENOMIC DNA]</scope>
    <source>
        <strain>CDC 1551 / Oshkosh</strain>
    </source>
</reference>
<organism>
    <name type="scientific">Mycobacterium tuberculosis (strain CDC 1551 / Oshkosh)</name>
    <dbReference type="NCBI Taxonomy" id="83331"/>
    <lineage>
        <taxon>Bacteria</taxon>
        <taxon>Bacillati</taxon>
        <taxon>Actinomycetota</taxon>
        <taxon>Actinomycetes</taxon>
        <taxon>Mycobacteriales</taxon>
        <taxon>Mycobacteriaceae</taxon>
        <taxon>Mycobacterium</taxon>
        <taxon>Mycobacterium tuberculosis complex</taxon>
    </lineage>
</organism>
<accession>P9WQJ0</accession>
<accession>L0T8W5</accession>
<accession>P0A4W4</accession>
<accession>Q11046</accession>
<protein>
    <recommendedName>
        <fullName>Uncharacterized ABC transporter ATP-binding protein MT1311</fullName>
    </recommendedName>
</protein>
<evidence type="ECO:0000255" key="1">
    <source>
        <dbReference type="PROSITE-ProRule" id="PRU00434"/>
    </source>
</evidence>
<evidence type="ECO:0000255" key="2">
    <source>
        <dbReference type="PROSITE-ProRule" id="PRU00441"/>
    </source>
</evidence>
<evidence type="ECO:0000305" key="3"/>
<sequence length="582" mass="62174">MLLALLRQHIRPYRRLVAMLMMLQLVSTLASLYLPTVNAEIVDDGVAKGDTATIVRLGAVMLGVTGLQVLCAIGAVYLGSRTGAGFGRDLRSAMFEHIITFSERETARFGAPTLLTRSTNDVRQILFLVQMTATVLVTAPIMCVGGIIMAIHQEAALTWLLLVSVPILAVANYWIISHMLPLFRRMQSLIDGINRVMRDQLSGVRVVRAFTREGYERDKFAQANTALSNAALSAGNWQALMLPVTTLTINASSVALIWFGGLRIDSGQMQVGSLIAFLSYFAQILMAVLMATMTLAVLPRASVCAERITEVLSTPAALGNPDNPKFPTDGVTGVVRLAGATFTYPGADCPVLQDISLTARPGTTTAIVGSTGSGKSTLVSLICRLYDVTAGAVLVDGIDVREYHTERLWSAIGLVPQRSYLFSGTVADNLRYGGGPDQVVTEQEMWEALRVAAADGFVQTDGLQTRVAQGGVNFSGGQRQRLAIARAVIRRPAIYVFDDAFSALDVHTDAKVHASLRQVSGDATIIVVTQRISNAAQADQVIVVDNGKIVGTGTHETLLADCPTYAEFAASQSLSATVGGVG</sequence>
<dbReference type="EMBL" id="AE000516">
    <property type="protein sequence ID" value="AAK45571.1"/>
    <property type="molecule type" value="Genomic_DNA"/>
</dbReference>
<dbReference type="PIR" id="A70755">
    <property type="entry name" value="A70755"/>
</dbReference>
<dbReference type="RefSeq" id="WP_003917445.1">
    <property type="nucleotide sequence ID" value="NC_002755.2"/>
</dbReference>
<dbReference type="SMR" id="P9WQJ0"/>
<dbReference type="KEGG" id="mtc:MT1311"/>
<dbReference type="PATRIC" id="fig|83331.31.peg.1416"/>
<dbReference type="HOGENOM" id="CLU_000604_84_3_11"/>
<dbReference type="Proteomes" id="UP000001020">
    <property type="component" value="Chromosome"/>
</dbReference>
<dbReference type="GO" id="GO:0005886">
    <property type="term" value="C:plasma membrane"/>
    <property type="evidence" value="ECO:0007669"/>
    <property type="project" value="UniProtKB-SubCell"/>
</dbReference>
<dbReference type="GO" id="GO:0015421">
    <property type="term" value="F:ABC-type oligopeptide transporter activity"/>
    <property type="evidence" value="ECO:0007669"/>
    <property type="project" value="TreeGrafter"/>
</dbReference>
<dbReference type="GO" id="GO:0005524">
    <property type="term" value="F:ATP binding"/>
    <property type="evidence" value="ECO:0007669"/>
    <property type="project" value="UniProtKB-KW"/>
</dbReference>
<dbReference type="GO" id="GO:0016887">
    <property type="term" value="F:ATP hydrolysis activity"/>
    <property type="evidence" value="ECO:0007669"/>
    <property type="project" value="InterPro"/>
</dbReference>
<dbReference type="CDD" id="cd18548">
    <property type="entry name" value="ABC_6TM_Tm287_like"/>
    <property type="match status" value="1"/>
</dbReference>
<dbReference type="FunFam" id="1.20.1560.10:FF:000040">
    <property type="entry name" value="Multidrug ABC transporter ATP-binding protein"/>
    <property type="match status" value="1"/>
</dbReference>
<dbReference type="FunFam" id="3.40.50.300:FF:000854">
    <property type="entry name" value="Multidrug ABC transporter ATP-binding protein"/>
    <property type="match status" value="1"/>
</dbReference>
<dbReference type="Gene3D" id="1.20.1560.10">
    <property type="entry name" value="ABC transporter type 1, transmembrane domain"/>
    <property type="match status" value="1"/>
</dbReference>
<dbReference type="Gene3D" id="3.40.50.300">
    <property type="entry name" value="P-loop containing nucleotide triphosphate hydrolases"/>
    <property type="match status" value="1"/>
</dbReference>
<dbReference type="InterPro" id="IPR003593">
    <property type="entry name" value="AAA+_ATPase"/>
</dbReference>
<dbReference type="InterPro" id="IPR011527">
    <property type="entry name" value="ABC1_TM_dom"/>
</dbReference>
<dbReference type="InterPro" id="IPR036640">
    <property type="entry name" value="ABC1_TM_sf"/>
</dbReference>
<dbReference type="InterPro" id="IPR003439">
    <property type="entry name" value="ABC_transporter-like_ATP-bd"/>
</dbReference>
<dbReference type="InterPro" id="IPR017871">
    <property type="entry name" value="ABC_transporter-like_CS"/>
</dbReference>
<dbReference type="InterPro" id="IPR027417">
    <property type="entry name" value="P-loop_NTPase"/>
</dbReference>
<dbReference type="InterPro" id="IPR039421">
    <property type="entry name" value="Type_1_exporter"/>
</dbReference>
<dbReference type="PANTHER" id="PTHR43394:SF1">
    <property type="entry name" value="ATP-BINDING CASSETTE SUB-FAMILY B MEMBER 10, MITOCHONDRIAL"/>
    <property type="match status" value="1"/>
</dbReference>
<dbReference type="PANTHER" id="PTHR43394">
    <property type="entry name" value="ATP-DEPENDENT PERMEASE MDL1, MITOCHONDRIAL"/>
    <property type="match status" value="1"/>
</dbReference>
<dbReference type="Pfam" id="PF00664">
    <property type="entry name" value="ABC_membrane"/>
    <property type="match status" value="1"/>
</dbReference>
<dbReference type="Pfam" id="PF00005">
    <property type="entry name" value="ABC_tran"/>
    <property type="match status" value="1"/>
</dbReference>
<dbReference type="SMART" id="SM00382">
    <property type="entry name" value="AAA"/>
    <property type="match status" value="1"/>
</dbReference>
<dbReference type="SUPFAM" id="SSF90123">
    <property type="entry name" value="ABC transporter transmembrane region"/>
    <property type="match status" value="1"/>
</dbReference>
<dbReference type="SUPFAM" id="SSF52540">
    <property type="entry name" value="P-loop containing nucleoside triphosphate hydrolases"/>
    <property type="match status" value="1"/>
</dbReference>
<dbReference type="PROSITE" id="PS50929">
    <property type="entry name" value="ABC_TM1F"/>
    <property type="match status" value="1"/>
</dbReference>
<dbReference type="PROSITE" id="PS00211">
    <property type="entry name" value="ABC_TRANSPORTER_1"/>
    <property type="match status" value="2"/>
</dbReference>
<dbReference type="PROSITE" id="PS50893">
    <property type="entry name" value="ABC_TRANSPORTER_2"/>
    <property type="match status" value="1"/>
</dbReference>
<proteinExistence type="inferred from homology"/>
<keyword id="KW-0067">ATP-binding</keyword>
<keyword id="KW-1003">Cell membrane</keyword>
<keyword id="KW-0472">Membrane</keyword>
<keyword id="KW-0547">Nucleotide-binding</keyword>
<keyword id="KW-1185">Reference proteome</keyword>
<keyword id="KW-0812">Transmembrane</keyword>
<keyword id="KW-1133">Transmembrane helix</keyword>
<keyword id="KW-0813">Transport</keyword>
<name>Y1273_MYCTO</name>
<comment type="subcellular location">
    <subcellularLocation>
        <location evidence="3">Cell membrane</location>
        <topology evidence="2">Multi-pass membrane protein</topology>
    </subcellularLocation>
</comment>
<comment type="similarity">
    <text evidence="3">Belongs to the ABC transporter superfamily.</text>
</comment>
<gene>
    <name type="ordered locus">MT1311</name>
</gene>